<comment type="function">
    <text>Transcription factor that binds to GC box promoter elements. Activates the transcription of these genes.</text>
</comment>
<comment type="subunit">
    <text evidence="3 5">Interacts with WWP1. Interacts with ANP32B; this interaction induces promoter region-specific histone incorporation and inhibition of histone acetylation by ANP32B.</text>
</comment>
<comment type="interaction">
    <interactant intactId="EBI-2696013">
        <id>Q13887</id>
    </interactant>
    <interactant intactId="EBI-930964">
        <id>P54253</id>
        <label>ATXN1</label>
    </interactant>
    <organismsDiffer>false</organismsDiffer>
    <experiments>7</experiments>
</comment>
<comment type="interaction">
    <interactant intactId="EBI-2696013">
        <id>Q13887</id>
    </interactant>
    <interactant intactId="EBI-10988864">
        <id>P46379-2</id>
        <label>BAG6</label>
    </interactant>
    <organismsDiffer>false</organismsDiffer>
    <experiments>3</experiments>
</comment>
<comment type="interaction">
    <interactant intactId="EBI-2696013">
        <id>Q13887</id>
    </interactant>
    <interactant intactId="EBI-21553822">
        <id>Q96A83-2</id>
        <label>COL26A1</label>
    </interactant>
    <organismsDiffer>false</organismsDiffer>
    <experiments>3</experiments>
</comment>
<comment type="interaction">
    <interactant intactId="EBI-2696013">
        <id>Q13887</id>
    </interactant>
    <interactant intactId="EBI-12593112">
        <id>O75190-2</id>
        <label>DNAJB6</label>
    </interactant>
    <organismsDiffer>false</organismsDiffer>
    <experiments>3</experiments>
</comment>
<comment type="interaction">
    <interactant intactId="EBI-2696013">
        <id>Q13887</id>
    </interactant>
    <interactant intactId="EBI-395638">
        <id>O14645</id>
        <label>DNALI1</label>
    </interactant>
    <organismsDiffer>false</organismsDiffer>
    <experiments>3</experiments>
</comment>
<comment type="interaction">
    <interactant intactId="EBI-2696013">
        <id>Q13887</id>
    </interactant>
    <interactant intactId="EBI-6398041">
        <id>Q9UMF0</id>
        <label>ICAM5</label>
    </interactant>
    <organismsDiffer>false</organismsDiffer>
    <experiments>3</experiments>
</comment>
<comment type="interaction">
    <interactant intactId="EBI-2696013">
        <id>Q13887</id>
    </interactant>
    <interactant intactId="EBI-948266">
        <id>O14901</id>
        <label>KLF11</label>
    </interactant>
    <organismsDiffer>false</organismsDiffer>
    <experiments>3</experiments>
</comment>
<comment type="interaction">
    <interactant intactId="EBI-2696013">
        <id>Q13887</id>
    </interactant>
    <interactant intactId="EBI-6190702">
        <id>P28331-2</id>
        <label>NDUFS1</label>
    </interactant>
    <organismsDiffer>false</organismsDiffer>
    <experiments>3</experiments>
</comment>
<comment type="interaction">
    <interactant intactId="EBI-2696013">
        <id>Q13887</id>
    </interactant>
    <interactant intactId="EBI-2811583">
        <id>Q9BVL2</id>
        <label>NUP58</label>
    </interactant>
    <organismsDiffer>false</organismsDiffer>
    <experiments>3</experiments>
</comment>
<comment type="interaction">
    <interactant intactId="EBI-2696013">
        <id>Q13887</id>
    </interactant>
    <interactant intactId="EBI-3390054">
        <id>P0CG48</id>
        <label>UBC</label>
    </interactant>
    <organismsDiffer>false</organismsDiffer>
    <experiments>2</experiments>
</comment>
<comment type="subcellular location">
    <subcellularLocation>
        <location evidence="3">Nucleus</location>
    </subcellularLocation>
</comment>
<comment type="alternative products">
    <event type="alternative splicing"/>
    <isoform>
        <id>Q13887-1</id>
        <name>1</name>
        <sequence type="displayed"/>
    </isoform>
    <isoform>
        <id>Q13887-2</id>
        <name>2</name>
        <sequence type="described" ref="VSP_047474"/>
    </isoform>
    <isoform>
        <id>Q13887-3</id>
        <name>3</name>
        <sequence type="described" ref="VSP_047475 VSP_047476"/>
    </isoform>
    <isoform>
        <id>Q13887-4</id>
        <name>4</name>
        <sequence type="described" ref="VSP_057567"/>
    </isoform>
</comment>
<comment type="tissue specificity">
    <text>Expressed only in testis and placenta.</text>
</comment>
<comment type="domain">
    <text evidence="7">The 9aaTAD motif is a transactivation domain present in a large number of yeast and animal transcription factors.</text>
</comment>
<comment type="PTM">
    <text evidence="3 6">Ubiquitinated. Polyubiquitination involves WWP1 and leads to proteasomal degradation of this protein (PubMed:15735697). Deubiquitinated by ATXN3L (PubMed:26079537).</text>
</comment>
<comment type="similarity">
    <text evidence="9">Belongs to the krueppel C2H2-type zinc-finger protein family.</text>
</comment>
<comment type="online information" name="Atlas of Genetics and Cytogenetics in Oncology and Haematology">
    <link uri="https://atlasgeneticsoncology.org/gene/41074/KLF5"/>
</comment>
<name>KLF5_HUMAN</name>
<sequence length="457" mass="50792">MATRVLSMSARLGPVPQPPAPQDEPVFAQLKPVLGAANPARDAALFPGEELKHAHHRPQAQPAPAQAPQPAQPPATGPRLPPEDLVQTRCEMEKYLTPQLPPVPIIPEHKKYRRDSASVVDQFFTDTEGLPYSINMNVFLPDITHLRTGLYKSQRPCVTHIKTEPVAIFSHQSETTAPPPAPTQALPEFTSIFSSHQTAAPEVNNIFIKQELPTPDLHLSVPTQQGHLYQLLNTPDLDMPSSTNQTAAMDTLNVSMSAAMAGLNTHTSAVPQTAVKQFQGMPPCTYTMPSQFLPQQATYFPPSPPSSEPGSPDRQAEMLQNLTPPPSYAATIASKLAIHNPNLPTTLPVNSQNIQPVRYNRRSNPDLEKRRIHYCDYPGCTKVYTKSSHLKAHLRTHTGEKPYKCTWEGCDWRFARSDELTRHYRKHTGAKPFQCGVCNRSFSRSDHLALHMKRHQN</sequence>
<evidence type="ECO:0000255" key="1">
    <source>
        <dbReference type="PROSITE-ProRule" id="PRU00042"/>
    </source>
</evidence>
<evidence type="ECO:0000256" key="2">
    <source>
        <dbReference type="SAM" id="MobiDB-lite"/>
    </source>
</evidence>
<evidence type="ECO:0000269" key="3">
    <source>
    </source>
</evidence>
<evidence type="ECO:0000269" key="4">
    <source>
    </source>
</evidence>
<evidence type="ECO:0000269" key="5">
    <source>
    </source>
</evidence>
<evidence type="ECO:0000269" key="6">
    <source>
    </source>
</evidence>
<evidence type="ECO:0000269" key="7">
    <source>
    </source>
</evidence>
<evidence type="ECO:0000303" key="8">
    <source>
    </source>
</evidence>
<evidence type="ECO:0000305" key="9"/>
<evidence type="ECO:0007744" key="10">
    <source>
    </source>
</evidence>
<evidence type="ECO:0007829" key="11">
    <source>
        <dbReference type="PDB" id="2EBT"/>
    </source>
</evidence>
<protein>
    <recommendedName>
        <fullName>Krueppel-like factor 5</fullName>
    </recommendedName>
    <alternativeName>
        <fullName>Basic transcription element-binding protein 2</fullName>
        <shortName>BTE-binding protein 2</shortName>
    </alternativeName>
    <alternativeName>
        <fullName>Colon krueppel-like factor</fullName>
    </alternativeName>
    <alternativeName>
        <fullName>GC-box-binding protein 2</fullName>
    </alternativeName>
    <alternativeName>
        <fullName>Intestinal-enriched krueppel-like factor</fullName>
    </alternativeName>
    <alternativeName>
        <fullName>Transcription factor BTEB2</fullName>
    </alternativeName>
</protein>
<organism>
    <name type="scientific">Homo sapiens</name>
    <name type="common">Human</name>
    <dbReference type="NCBI Taxonomy" id="9606"/>
    <lineage>
        <taxon>Eukaryota</taxon>
        <taxon>Metazoa</taxon>
        <taxon>Chordata</taxon>
        <taxon>Craniata</taxon>
        <taxon>Vertebrata</taxon>
        <taxon>Euteleostomi</taxon>
        <taxon>Mammalia</taxon>
        <taxon>Eutheria</taxon>
        <taxon>Euarchontoglires</taxon>
        <taxon>Primates</taxon>
        <taxon>Haplorrhini</taxon>
        <taxon>Catarrhini</taxon>
        <taxon>Hominidae</taxon>
        <taxon>Homo</taxon>
    </lineage>
</organism>
<keyword id="KW-0002">3D-structure</keyword>
<keyword id="KW-0010">Activator</keyword>
<keyword id="KW-0025">Alternative splicing</keyword>
<keyword id="KW-0238">DNA-binding</keyword>
<keyword id="KW-1017">Isopeptide bond</keyword>
<keyword id="KW-0479">Metal-binding</keyword>
<keyword id="KW-0539">Nucleus</keyword>
<keyword id="KW-1267">Proteomics identification</keyword>
<keyword id="KW-1185">Reference proteome</keyword>
<keyword id="KW-0677">Repeat</keyword>
<keyword id="KW-0804">Transcription</keyword>
<keyword id="KW-0805">Transcription regulation</keyword>
<keyword id="KW-0832">Ubl conjugation</keyword>
<keyword id="KW-0862">Zinc</keyword>
<keyword id="KW-0863">Zinc-finger</keyword>
<reference key="1">
    <citation type="journal article" date="1999" name="Nucleic Acids Res.">
        <title>Isolation and characterization of a gene encoding human Kruppel-like factor 5 (IKLF): binding to the CAAT/GT box of the mouse lactoferrin gene promoter.</title>
        <authorList>
            <person name="Shi H."/>
            <person name="Zhang Z."/>
            <person name="Wang X."/>
            <person name="Liu S."/>
            <person name="Teng C.T."/>
        </authorList>
    </citation>
    <scope>NUCLEOTIDE SEQUENCE [MRNA] (ISOFORM 1)</scope>
</reference>
<reference key="2">
    <citation type="journal article" date="2013" name="FASEB J.">
        <title>Shaking the family tree: Identification of novel and biologically active alternatively spliced isoforms across the KLF family of transcription factors.</title>
        <authorList>
            <person name="Camacho-Vanegas O."/>
            <person name="Till J."/>
            <person name="Miranda-Lorenzo I."/>
            <person name="Ozturk B."/>
            <person name="Camacho S.C."/>
            <person name="Martignetti J.A."/>
        </authorList>
    </citation>
    <scope>NUCLEOTIDE SEQUENCE [MRNA] (ISOFORMS 2 AND 3)</scope>
    <scope>ALTERNATIVE SPLICING</scope>
</reference>
<reference key="3">
    <citation type="submission" date="1999-08" db="EMBL/GenBank/DDBJ databases">
        <title>Human basic transcription element binding protein 2.</title>
        <authorList>
            <person name="Ohnishi S."/>
            <person name="Yoshida T."/>
            <person name="Ramirez F."/>
            <person name="Terada M."/>
            <person name="Friedrich L."/>
        </authorList>
    </citation>
    <scope>NUCLEOTIDE SEQUENCE [MRNA] (ISOFORM 1)</scope>
</reference>
<reference key="4">
    <citation type="submission" date="2000-07" db="EMBL/GenBank/DDBJ databases">
        <title>Human Kruppel like factor5/KLF5: expression in human skin and hair follicles.</title>
        <authorList>
            <person name="Sur I."/>
            <person name="Unden A.-B."/>
            <person name="Toftgard R."/>
        </authorList>
    </citation>
    <scope>NUCLEOTIDE SEQUENCE [MRNA] (ISOFORM 1)</scope>
</reference>
<reference key="5">
    <citation type="submission" date="2007-02" db="EMBL/GenBank/DDBJ databases">
        <title>Functional identification testis-specific transcript of Kruppel-like factor 5 (tKLF5).</title>
        <authorList>
            <person name="Dong X."/>
            <person name="Guo P."/>
            <person name="Dong J."/>
        </authorList>
    </citation>
    <scope>NUCLEOTIDE SEQUENCE [MRNA] (ISOFORM 4)</scope>
</reference>
<reference key="6">
    <citation type="journal article" date="2004" name="Nat. Genet.">
        <title>Complete sequencing and characterization of 21,243 full-length human cDNAs.</title>
        <authorList>
            <person name="Ota T."/>
            <person name="Suzuki Y."/>
            <person name="Nishikawa T."/>
            <person name="Otsuki T."/>
            <person name="Sugiyama T."/>
            <person name="Irie R."/>
            <person name="Wakamatsu A."/>
            <person name="Hayashi K."/>
            <person name="Sato H."/>
            <person name="Nagai K."/>
            <person name="Kimura K."/>
            <person name="Makita H."/>
            <person name="Sekine M."/>
            <person name="Obayashi M."/>
            <person name="Nishi T."/>
            <person name="Shibahara T."/>
            <person name="Tanaka T."/>
            <person name="Ishii S."/>
            <person name="Yamamoto J."/>
            <person name="Saito K."/>
            <person name="Kawai Y."/>
            <person name="Isono Y."/>
            <person name="Nakamura Y."/>
            <person name="Nagahari K."/>
            <person name="Murakami K."/>
            <person name="Yasuda T."/>
            <person name="Iwayanagi T."/>
            <person name="Wagatsuma M."/>
            <person name="Shiratori A."/>
            <person name="Sudo H."/>
            <person name="Hosoiri T."/>
            <person name="Kaku Y."/>
            <person name="Kodaira H."/>
            <person name="Kondo H."/>
            <person name="Sugawara M."/>
            <person name="Takahashi M."/>
            <person name="Kanda K."/>
            <person name="Yokoi T."/>
            <person name="Furuya T."/>
            <person name="Kikkawa E."/>
            <person name="Omura Y."/>
            <person name="Abe K."/>
            <person name="Kamihara K."/>
            <person name="Katsuta N."/>
            <person name="Sato K."/>
            <person name="Tanikawa M."/>
            <person name="Yamazaki M."/>
            <person name="Ninomiya K."/>
            <person name="Ishibashi T."/>
            <person name="Yamashita H."/>
            <person name="Murakawa K."/>
            <person name="Fujimori K."/>
            <person name="Tanai H."/>
            <person name="Kimata M."/>
            <person name="Watanabe M."/>
            <person name="Hiraoka S."/>
            <person name="Chiba Y."/>
            <person name="Ishida S."/>
            <person name="Ono Y."/>
            <person name="Takiguchi S."/>
            <person name="Watanabe S."/>
            <person name="Yosida M."/>
            <person name="Hotuta T."/>
            <person name="Kusano J."/>
            <person name="Kanehori K."/>
            <person name="Takahashi-Fujii A."/>
            <person name="Hara H."/>
            <person name="Tanase T.-O."/>
            <person name="Nomura Y."/>
            <person name="Togiya S."/>
            <person name="Komai F."/>
            <person name="Hara R."/>
            <person name="Takeuchi K."/>
            <person name="Arita M."/>
            <person name="Imose N."/>
            <person name="Musashino K."/>
            <person name="Yuuki H."/>
            <person name="Oshima A."/>
            <person name="Sasaki N."/>
            <person name="Aotsuka S."/>
            <person name="Yoshikawa Y."/>
            <person name="Matsunawa H."/>
            <person name="Ichihara T."/>
            <person name="Shiohata N."/>
            <person name="Sano S."/>
            <person name="Moriya S."/>
            <person name="Momiyama H."/>
            <person name="Satoh N."/>
            <person name="Takami S."/>
            <person name="Terashima Y."/>
            <person name="Suzuki O."/>
            <person name="Nakagawa S."/>
            <person name="Senoh A."/>
            <person name="Mizoguchi H."/>
            <person name="Goto Y."/>
            <person name="Shimizu F."/>
            <person name="Wakebe H."/>
            <person name="Hishigaki H."/>
            <person name="Watanabe T."/>
            <person name="Sugiyama A."/>
            <person name="Takemoto M."/>
            <person name="Kawakami B."/>
            <person name="Yamazaki M."/>
            <person name="Watanabe K."/>
            <person name="Kumagai A."/>
            <person name="Itakura S."/>
            <person name="Fukuzumi Y."/>
            <person name="Fujimori Y."/>
            <person name="Komiyama M."/>
            <person name="Tashiro H."/>
            <person name="Tanigami A."/>
            <person name="Fujiwara T."/>
            <person name="Ono T."/>
            <person name="Yamada K."/>
            <person name="Fujii Y."/>
            <person name="Ozaki K."/>
            <person name="Hirao M."/>
            <person name="Ohmori Y."/>
            <person name="Kawabata A."/>
            <person name="Hikiji T."/>
            <person name="Kobatake N."/>
            <person name="Inagaki H."/>
            <person name="Ikema Y."/>
            <person name="Okamoto S."/>
            <person name="Okitani R."/>
            <person name="Kawakami T."/>
            <person name="Noguchi S."/>
            <person name="Itoh T."/>
            <person name="Shigeta K."/>
            <person name="Senba T."/>
            <person name="Matsumura K."/>
            <person name="Nakajima Y."/>
            <person name="Mizuno T."/>
            <person name="Morinaga M."/>
            <person name="Sasaki M."/>
            <person name="Togashi T."/>
            <person name="Oyama M."/>
            <person name="Hata H."/>
            <person name="Watanabe M."/>
            <person name="Komatsu T."/>
            <person name="Mizushima-Sugano J."/>
            <person name="Satoh T."/>
            <person name="Shirai Y."/>
            <person name="Takahashi Y."/>
            <person name="Nakagawa K."/>
            <person name="Okumura K."/>
            <person name="Nagase T."/>
            <person name="Nomura N."/>
            <person name="Kikuchi H."/>
            <person name="Masuho Y."/>
            <person name="Yamashita R."/>
            <person name="Nakai K."/>
            <person name="Yada T."/>
            <person name="Nakamura Y."/>
            <person name="Ohara O."/>
            <person name="Isogai T."/>
            <person name="Sugano S."/>
        </authorList>
    </citation>
    <scope>NUCLEOTIDE SEQUENCE [LARGE SCALE MRNA] (ISOFORM 4)</scope>
    <source>
        <tissue>Testis</tissue>
    </source>
</reference>
<reference key="7">
    <citation type="journal article" date="2004" name="Nature">
        <title>The DNA sequence and analysis of human chromosome 13.</title>
        <authorList>
            <person name="Dunham A."/>
            <person name="Matthews L.H."/>
            <person name="Burton J."/>
            <person name="Ashurst J.L."/>
            <person name="Howe K.L."/>
            <person name="Ashcroft K.J."/>
            <person name="Beare D.M."/>
            <person name="Burford D.C."/>
            <person name="Hunt S.E."/>
            <person name="Griffiths-Jones S."/>
            <person name="Jones M.C."/>
            <person name="Keenan S.J."/>
            <person name="Oliver K."/>
            <person name="Scott C.E."/>
            <person name="Ainscough R."/>
            <person name="Almeida J.P."/>
            <person name="Ambrose K.D."/>
            <person name="Andrews D.T."/>
            <person name="Ashwell R.I.S."/>
            <person name="Babbage A.K."/>
            <person name="Bagguley C.L."/>
            <person name="Bailey J."/>
            <person name="Bannerjee R."/>
            <person name="Barlow K.F."/>
            <person name="Bates K."/>
            <person name="Beasley H."/>
            <person name="Bird C.P."/>
            <person name="Bray-Allen S."/>
            <person name="Brown A.J."/>
            <person name="Brown J.Y."/>
            <person name="Burrill W."/>
            <person name="Carder C."/>
            <person name="Carter N.P."/>
            <person name="Chapman J.C."/>
            <person name="Clamp M.E."/>
            <person name="Clark S.Y."/>
            <person name="Clarke G."/>
            <person name="Clee C.M."/>
            <person name="Clegg S.C."/>
            <person name="Cobley V."/>
            <person name="Collins J.E."/>
            <person name="Corby N."/>
            <person name="Coville G.J."/>
            <person name="Deloukas P."/>
            <person name="Dhami P."/>
            <person name="Dunham I."/>
            <person name="Dunn M."/>
            <person name="Earthrowl M.E."/>
            <person name="Ellington A.G."/>
            <person name="Faulkner L."/>
            <person name="Frankish A.G."/>
            <person name="Frankland J."/>
            <person name="French L."/>
            <person name="Garner P."/>
            <person name="Garnett J."/>
            <person name="Gilbert J.G.R."/>
            <person name="Gilson C.J."/>
            <person name="Ghori J."/>
            <person name="Grafham D.V."/>
            <person name="Gribble S.M."/>
            <person name="Griffiths C."/>
            <person name="Hall R.E."/>
            <person name="Hammond S."/>
            <person name="Harley J.L."/>
            <person name="Hart E.A."/>
            <person name="Heath P.D."/>
            <person name="Howden P.J."/>
            <person name="Huckle E.J."/>
            <person name="Hunt P.J."/>
            <person name="Hunt A.R."/>
            <person name="Johnson C."/>
            <person name="Johnson D."/>
            <person name="Kay M."/>
            <person name="Kimberley A.M."/>
            <person name="King A."/>
            <person name="Laird G.K."/>
            <person name="Langford C.J."/>
            <person name="Lawlor S."/>
            <person name="Leongamornlert D.A."/>
            <person name="Lloyd D.M."/>
            <person name="Lloyd C."/>
            <person name="Loveland J.E."/>
            <person name="Lovell J."/>
            <person name="Martin S."/>
            <person name="Mashreghi-Mohammadi M."/>
            <person name="McLaren S.J."/>
            <person name="McMurray A."/>
            <person name="Milne S."/>
            <person name="Moore M.J.F."/>
            <person name="Nickerson T."/>
            <person name="Palmer S.A."/>
            <person name="Pearce A.V."/>
            <person name="Peck A.I."/>
            <person name="Pelan S."/>
            <person name="Phillimore B."/>
            <person name="Porter K.M."/>
            <person name="Rice C.M."/>
            <person name="Searle S."/>
            <person name="Sehra H.K."/>
            <person name="Shownkeen R."/>
            <person name="Skuce C.D."/>
            <person name="Smith M."/>
            <person name="Steward C.A."/>
            <person name="Sycamore N."/>
            <person name="Tester J."/>
            <person name="Thomas D.W."/>
            <person name="Tracey A."/>
            <person name="Tromans A."/>
            <person name="Tubby B."/>
            <person name="Wall M."/>
            <person name="Wallis J.M."/>
            <person name="West A.P."/>
            <person name="Whitehead S.L."/>
            <person name="Willey D.L."/>
            <person name="Wilming L."/>
            <person name="Wray P.W."/>
            <person name="Wright M.W."/>
            <person name="Young L."/>
            <person name="Coulson A."/>
            <person name="Durbin R.M."/>
            <person name="Hubbard T."/>
            <person name="Sulston J.E."/>
            <person name="Beck S."/>
            <person name="Bentley D.R."/>
            <person name="Rogers J."/>
            <person name="Ross M.T."/>
        </authorList>
    </citation>
    <scope>NUCLEOTIDE SEQUENCE [LARGE SCALE GENOMIC DNA]</scope>
</reference>
<reference key="8">
    <citation type="submission" date="2005-07" db="EMBL/GenBank/DDBJ databases">
        <authorList>
            <person name="Mural R.J."/>
            <person name="Istrail S."/>
            <person name="Sutton G.G."/>
            <person name="Florea L."/>
            <person name="Halpern A.L."/>
            <person name="Mobarry C.M."/>
            <person name="Lippert R."/>
            <person name="Walenz B."/>
            <person name="Shatkay H."/>
            <person name="Dew I."/>
            <person name="Miller J.R."/>
            <person name="Flanigan M.J."/>
            <person name="Edwards N.J."/>
            <person name="Bolanos R."/>
            <person name="Fasulo D."/>
            <person name="Halldorsson B.V."/>
            <person name="Hannenhalli S."/>
            <person name="Turner R."/>
            <person name="Yooseph S."/>
            <person name="Lu F."/>
            <person name="Nusskern D.R."/>
            <person name="Shue B.C."/>
            <person name="Zheng X.H."/>
            <person name="Zhong F."/>
            <person name="Delcher A.L."/>
            <person name="Huson D.H."/>
            <person name="Kravitz S.A."/>
            <person name="Mouchard L."/>
            <person name="Reinert K."/>
            <person name="Remington K.A."/>
            <person name="Clark A.G."/>
            <person name="Waterman M.S."/>
            <person name="Eichler E.E."/>
            <person name="Adams M.D."/>
            <person name="Hunkapiller M.W."/>
            <person name="Myers E.W."/>
            <person name="Venter J.C."/>
        </authorList>
    </citation>
    <scope>NUCLEOTIDE SEQUENCE [LARGE SCALE GENOMIC DNA]</scope>
</reference>
<reference key="9">
    <citation type="journal article" date="2004" name="Genome Res.">
        <title>The status, quality, and expansion of the NIH full-length cDNA project: the Mammalian Gene Collection (MGC).</title>
        <authorList>
            <consortium name="The MGC Project Team"/>
        </authorList>
    </citation>
    <scope>NUCLEOTIDE SEQUENCE [LARGE SCALE MRNA] (ISOFORM 1)</scope>
    <source>
        <tissue>Brain</tissue>
        <tissue>Placenta</tissue>
    </source>
</reference>
<reference key="10">
    <citation type="journal article" date="1993" name="Nucleic Acids Res.">
        <title>cDNA cloning and transcriptional properties of a novel GC box-binding protein, BTEB2.</title>
        <authorList>
            <person name="Sogawa K."/>
            <person name="Imataka H."/>
            <person name="Yamasaki Y."/>
            <person name="Kusume H."/>
            <person name="Abe H."/>
            <person name="Fujii-Kuriyama Y."/>
        </authorList>
    </citation>
    <scope>NUCLEOTIDE SEQUENCE [MRNA] OF 239-457 (ISOFORM 1)</scope>
    <source>
        <tissue>Placenta</tissue>
    </source>
</reference>
<reference key="11">
    <citation type="journal article" date="2005" name="Oncogene">
        <title>Ubiquitin-proteasome degradation of KLF5 transcription factor in cancer and untransformed epithelial cells.</title>
        <authorList>
            <person name="Chen C."/>
            <person name="Sun X."/>
            <person name="Ran Q."/>
            <person name="Wilkinson K.D."/>
            <person name="Murphy T.J."/>
            <person name="Simons J.W."/>
            <person name="Dong J.T."/>
        </authorList>
    </citation>
    <scope>SUBCELLULAR LOCATION</scope>
    <scope>INTERACTION WITH WWP1</scope>
    <scope>UBIQUITINATION</scope>
    <scope>MUTAGENESIS OF 324-PRO--TYR-328</scope>
</reference>
<reference key="12">
    <citation type="journal article" date="2008" name="Mol. Cell. Biol.">
        <title>Promoter region-specific histone incorporation by the novel histone chaperone ANP32B and DNA-binding factor KLF5.</title>
        <authorList>
            <person name="Munemasa Y."/>
            <person name="Suzuki T."/>
            <person name="Aizawa K."/>
            <person name="Miyamoto S."/>
            <person name="Imai Y."/>
            <person name="Matsumura T."/>
            <person name="Horikoshi M."/>
            <person name="Nagai R."/>
        </authorList>
    </citation>
    <scope>INTERACTION WITH ANP32B</scope>
</reference>
<reference key="13">
    <citation type="journal article" date="2017" name="Nat. Struct. Mol. Biol.">
        <title>Site-specific mapping of the human SUMO proteome reveals co-modification with phosphorylation.</title>
        <authorList>
            <person name="Hendriks I.A."/>
            <person name="Lyon D."/>
            <person name="Young C."/>
            <person name="Jensen L.J."/>
            <person name="Vertegaal A.C."/>
            <person name="Nielsen M.L."/>
        </authorList>
    </citation>
    <scope>SUMOYLATION [LARGE SCALE ANALYSIS] AT LYS-31; LYS-52; LYS-94 AND LYS-110</scope>
    <scope>IDENTIFICATION BY MASS SPECTROMETRY [LARGE SCALE ANALYSIS]</scope>
</reference>
<reference key="14">
    <citation type="journal article" date="2020" name="Cell. Mol. Life Sci.">
        <title>The evolution of the 9aaTAD domain in Sp2 proteins: inactivation with valines and intron reservoirs.</title>
        <authorList>
            <person name="Piskacek M."/>
            <person name="Havelka M."/>
            <person name="Jendruchova K."/>
            <person name="Knight A."/>
            <person name="Keegan L.P."/>
        </authorList>
    </citation>
    <scope>9AATAD MOTIF</scope>
</reference>
<reference key="15">
    <citation type="submission" date="2008-02" db="PDB data bank">
        <title>Solution structure of three tandem repeats of ZF-C2H2 domains from human kruppel-like factor 5.</title>
        <authorList>
            <consortium name="RIKEN structural genomics initiative (RSGI)"/>
        </authorList>
    </citation>
    <scope>STRUCTURE BY NMR OF 363-457</scope>
</reference>
<reference key="16">
    <citation type="journal article" date="2006" name="Science">
        <title>The consensus coding sequences of human breast and colorectal cancers.</title>
        <authorList>
            <person name="Sjoeblom T."/>
            <person name="Jones S."/>
            <person name="Wood L.D."/>
            <person name="Parsons D.W."/>
            <person name="Lin J."/>
            <person name="Barber T.D."/>
            <person name="Mandelker D."/>
            <person name="Leary R.J."/>
            <person name="Ptak J."/>
            <person name="Silliman N."/>
            <person name="Szabo S."/>
            <person name="Buckhaults P."/>
            <person name="Farrell C."/>
            <person name="Meeh P."/>
            <person name="Markowitz S.D."/>
            <person name="Willis J."/>
            <person name="Dawson D."/>
            <person name="Willson J.K.V."/>
            <person name="Gazdar A.F."/>
            <person name="Hartigan J."/>
            <person name="Wu L."/>
            <person name="Liu C."/>
            <person name="Parmigiani G."/>
            <person name="Park B.H."/>
            <person name="Bachman K.E."/>
            <person name="Papadopoulos N."/>
            <person name="Vogelstein B."/>
            <person name="Kinzler K.W."/>
            <person name="Velculescu V.E."/>
        </authorList>
    </citation>
    <scope>VARIANT [LARGE SCALE ANALYSIS] SER-301</scope>
</reference>
<reference key="17">
    <citation type="journal article" date="2015" name="Oncotarget">
        <title>Ataxin-3 like (ATXN3L), a member of the Josephin family of deubiquitinating enzymes, promotes breast cancer proliferation by deubiquitinating Krueppel-like factor 5 (KLF5).</title>
        <authorList>
            <person name="Ge F."/>
            <person name="Chen W."/>
            <person name="Qin J."/>
            <person name="Zhou Z."/>
            <person name="Liu R."/>
            <person name="Liu L."/>
            <person name="Tan J."/>
            <person name="Zou T."/>
            <person name="Li H."/>
            <person name="Ren G."/>
            <person name="Chen C."/>
        </authorList>
    </citation>
    <scope>DEUBIQUITINATION BY ATXN3L</scope>
</reference>
<feature type="chain" id="PRO_0000047169" description="Krueppel-like factor 5">
    <location>
        <begin position="1"/>
        <end position="457"/>
    </location>
</feature>
<feature type="zinc finger region" description="C2H2-type 1" evidence="1">
    <location>
        <begin position="373"/>
        <end position="397"/>
    </location>
</feature>
<feature type="zinc finger region" description="C2H2-type 2" evidence="1">
    <location>
        <begin position="403"/>
        <end position="427"/>
    </location>
</feature>
<feature type="zinc finger region" description="C2H2-type 3" evidence="1">
    <location>
        <begin position="433"/>
        <end position="455"/>
    </location>
</feature>
<feature type="region of interest" description="Disordered" evidence="2">
    <location>
        <begin position="1"/>
        <end position="83"/>
    </location>
</feature>
<feature type="region of interest" description="Disordered" evidence="2">
    <location>
        <begin position="295"/>
        <end position="321"/>
    </location>
</feature>
<feature type="region of interest" description="Interaction with WWP1" evidence="3">
    <location>
        <begin position="324"/>
        <end position="328"/>
    </location>
</feature>
<feature type="short sequence motif" description="9aaTAD" evidence="7">
    <location>
        <begin position="118"/>
        <end position="126"/>
    </location>
</feature>
<feature type="compositionally biased region" description="Pro residues" evidence="2">
    <location>
        <begin position="65"/>
        <end position="80"/>
    </location>
</feature>
<feature type="cross-link" description="Glycyl lysine isopeptide (Lys-Gly) (interchain with G-Cter in SUMO2)" evidence="10">
    <location>
        <position position="31"/>
    </location>
</feature>
<feature type="cross-link" description="Glycyl lysine isopeptide (Lys-Gly) (interchain with G-Cter in SUMO2)" evidence="10">
    <location>
        <position position="52"/>
    </location>
</feature>
<feature type="cross-link" description="Glycyl lysine isopeptide (Lys-Gly) (interchain with G-Cter in SUMO2)" evidence="10">
    <location>
        <position position="94"/>
    </location>
</feature>
<feature type="cross-link" description="Glycyl lysine isopeptide (Lys-Gly) (interchain with G-Cter in SUMO2)" evidence="10">
    <location>
        <position position="110"/>
    </location>
</feature>
<feature type="splice variant" id="VSP_057567" description="In isoform 4.">
    <location>
        <begin position="1"/>
        <end position="91"/>
    </location>
</feature>
<feature type="splice variant" id="VSP_047474" description="In isoform 2." evidence="8">
    <location>
        <begin position="88"/>
        <end position="239"/>
    </location>
</feature>
<feature type="splice variant" id="VSP_047475" description="In isoform 3." evidence="8">
    <original>IIPEHKKYRRDSASVVDQFFTDTEGLPYSINMNVFLPDITHLRTGLYKSQRPCVTHIKTEPV</original>
    <variation>MLLQLLLNWQFTIQIYPPPCQLTHKTSNLSDTIEGVTPIWRNDASTTAITLVAQKFIPSLLI</variation>
    <location>
        <begin position="105"/>
        <end position="166"/>
    </location>
</feature>
<feature type="splice variant" id="VSP_047476" description="In isoform 3." evidence="8">
    <location>
        <begin position="167"/>
        <end position="457"/>
    </location>
</feature>
<feature type="sequence variant" id="VAR_035555" description="In a colorectal cancer sample; somatic mutation." evidence="4">
    <original>P</original>
    <variation>S</variation>
    <location>
        <position position="301"/>
    </location>
</feature>
<feature type="mutagenesis site" description="Impairs ubiquitination and degradation." evidence="3">
    <location>
        <begin position="324"/>
        <end position="328"/>
    </location>
</feature>
<feature type="strand" evidence="11">
    <location>
        <begin position="377"/>
        <end position="379"/>
    </location>
</feature>
<feature type="strand" evidence="11">
    <location>
        <begin position="383"/>
        <end position="385"/>
    </location>
</feature>
<feature type="helix" evidence="11">
    <location>
        <begin position="387"/>
        <end position="397"/>
    </location>
</feature>
<feature type="strand" evidence="11">
    <location>
        <begin position="407"/>
        <end position="409"/>
    </location>
</feature>
<feature type="strand" evidence="11">
    <location>
        <begin position="413"/>
        <end position="416"/>
    </location>
</feature>
<feature type="helix" evidence="11">
    <location>
        <begin position="417"/>
        <end position="427"/>
    </location>
</feature>
<feature type="strand" evidence="11">
    <location>
        <begin position="436"/>
        <end position="438"/>
    </location>
</feature>
<feature type="helix" evidence="11">
    <location>
        <begin position="445"/>
        <end position="455"/>
    </location>
</feature>
<proteinExistence type="evidence at protein level"/>
<dbReference type="EMBL" id="AF132818">
    <property type="protein sequence ID" value="AAF18307.1"/>
    <property type="molecule type" value="mRNA"/>
</dbReference>
<dbReference type="EMBL" id="HF546203">
    <property type="protein sequence ID" value="CCO02789.1"/>
    <property type="molecule type" value="mRNA"/>
</dbReference>
<dbReference type="EMBL" id="HF546204">
    <property type="protein sequence ID" value="CCO02790.1"/>
    <property type="molecule type" value="mRNA"/>
</dbReference>
<dbReference type="EMBL" id="AB030824">
    <property type="protein sequence ID" value="BAA96461.1"/>
    <property type="molecule type" value="mRNA"/>
</dbReference>
<dbReference type="EMBL" id="AF287272">
    <property type="protein sequence ID" value="AAF88068.1"/>
    <property type="molecule type" value="mRNA"/>
</dbReference>
<dbReference type="EMBL" id="EF208215">
    <property type="protein sequence ID" value="ABM97548.1"/>
    <property type="molecule type" value="mRNA"/>
</dbReference>
<dbReference type="EMBL" id="AK302280">
    <property type="protein sequence ID" value="BAG63623.1"/>
    <property type="molecule type" value="mRNA"/>
</dbReference>
<dbReference type="EMBL" id="AL354720">
    <property type="status" value="NOT_ANNOTATED_CDS"/>
    <property type="molecule type" value="Genomic_DNA"/>
</dbReference>
<dbReference type="EMBL" id="CH471093">
    <property type="protein sequence ID" value="EAW80526.1"/>
    <property type="molecule type" value="Genomic_DNA"/>
</dbReference>
<dbReference type="EMBL" id="BC007695">
    <property type="protein sequence ID" value="AAH07695.1"/>
    <property type="molecule type" value="mRNA"/>
</dbReference>
<dbReference type="EMBL" id="BC042131">
    <property type="protein sequence ID" value="AAH42131.1"/>
    <property type="molecule type" value="mRNA"/>
</dbReference>
<dbReference type="EMBL" id="D14520">
    <property type="protein sequence ID" value="BAA03393.1"/>
    <property type="molecule type" value="mRNA"/>
</dbReference>
<dbReference type="CCDS" id="CCDS66562.1">
    <molecule id="Q13887-4"/>
</dbReference>
<dbReference type="CCDS" id="CCDS9448.1">
    <molecule id="Q13887-1"/>
</dbReference>
<dbReference type="PIR" id="S35643">
    <property type="entry name" value="S35643"/>
</dbReference>
<dbReference type="RefSeq" id="NP_001273747.1">
    <molecule id="Q13887-4"/>
    <property type="nucleotide sequence ID" value="NM_001286818.2"/>
</dbReference>
<dbReference type="RefSeq" id="NP_001721.2">
    <molecule id="Q13887-1"/>
    <property type="nucleotide sequence ID" value="NM_001730.4"/>
</dbReference>
<dbReference type="PDB" id="2EBT">
    <property type="method" value="NMR"/>
    <property type="chains" value="A=365-457"/>
</dbReference>
<dbReference type="PDBsum" id="2EBT"/>
<dbReference type="SMR" id="Q13887"/>
<dbReference type="BioGRID" id="107153">
    <property type="interactions" value="190"/>
</dbReference>
<dbReference type="FunCoup" id="Q13887">
    <property type="interactions" value="1608"/>
</dbReference>
<dbReference type="IntAct" id="Q13887">
    <property type="interactions" value="142"/>
</dbReference>
<dbReference type="MINT" id="Q13887"/>
<dbReference type="STRING" id="9606.ENSP00000366915"/>
<dbReference type="BindingDB" id="Q13887"/>
<dbReference type="ChEMBL" id="CHEMBL1293249"/>
<dbReference type="GlyCosmos" id="Q13887">
    <property type="glycosylation" value="1 site, 1 glycan"/>
</dbReference>
<dbReference type="GlyGen" id="Q13887">
    <property type="glycosylation" value="3 sites, 1 O-linked glycan (2 sites)"/>
</dbReference>
<dbReference type="iPTMnet" id="Q13887"/>
<dbReference type="PhosphoSitePlus" id="Q13887"/>
<dbReference type="SwissPalm" id="Q13887"/>
<dbReference type="BioMuta" id="KLF5"/>
<dbReference type="DMDM" id="12644412"/>
<dbReference type="jPOST" id="Q13887"/>
<dbReference type="MassIVE" id="Q13887"/>
<dbReference type="PaxDb" id="9606-ENSP00000366915"/>
<dbReference type="PeptideAtlas" id="Q13887"/>
<dbReference type="ProteomicsDB" id="527"/>
<dbReference type="ProteomicsDB" id="59715">
    <molecule id="Q13887-1"/>
</dbReference>
<dbReference type="Pumba" id="Q13887"/>
<dbReference type="Antibodypedia" id="24429">
    <property type="antibodies" value="358 antibodies from 35 providers"/>
</dbReference>
<dbReference type="DNASU" id="688"/>
<dbReference type="Ensembl" id="ENST00000377687.6">
    <molecule id="Q13887-1"/>
    <property type="protein sequence ID" value="ENSP00000366915.4"/>
    <property type="gene ID" value="ENSG00000102554.14"/>
</dbReference>
<dbReference type="Ensembl" id="ENST00000539231.5">
    <molecule id="Q13887-4"/>
    <property type="protein sequence ID" value="ENSP00000440407.1"/>
    <property type="gene ID" value="ENSG00000102554.14"/>
</dbReference>
<dbReference type="GeneID" id="688"/>
<dbReference type="KEGG" id="hsa:688"/>
<dbReference type="MANE-Select" id="ENST00000377687.6">
    <property type="protein sequence ID" value="ENSP00000366915.4"/>
    <property type="RefSeq nucleotide sequence ID" value="NM_001730.5"/>
    <property type="RefSeq protein sequence ID" value="NP_001721.2"/>
</dbReference>
<dbReference type="UCSC" id="uc001vjd.5">
    <property type="organism name" value="human"/>
</dbReference>
<dbReference type="AGR" id="HGNC:6349"/>
<dbReference type="CTD" id="688"/>
<dbReference type="DisGeNET" id="688"/>
<dbReference type="GeneCards" id="KLF5"/>
<dbReference type="HGNC" id="HGNC:6349">
    <property type="gene designation" value="KLF5"/>
</dbReference>
<dbReference type="HPA" id="ENSG00000102554">
    <property type="expression patterns" value="Tissue enhanced (esophagus, skin)"/>
</dbReference>
<dbReference type="MalaCards" id="KLF5"/>
<dbReference type="MIM" id="602903">
    <property type="type" value="gene"/>
</dbReference>
<dbReference type="neXtProt" id="NX_Q13887"/>
<dbReference type="OpenTargets" id="ENSG00000102554"/>
<dbReference type="PharmGKB" id="PA30139"/>
<dbReference type="VEuPathDB" id="HostDB:ENSG00000102554"/>
<dbReference type="eggNOG" id="KOG1721">
    <property type="taxonomic scope" value="Eukaryota"/>
</dbReference>
<dbReference type="GeneTree" id="ENSGT00940000156711"/>
<dbReference type="InParanoid" id="Q13887"/>
<dbReference type="OMA" id="QEMPSQF"/>
<dbReference type="OrthoDB" id="4748970at2759"/>
<dbReference type="PAN-GO" id="Q13887">
    <property type="GO annotations" value="3 GO annotations based on evolutionary models"/>
</dbReference>
<dbReference type="PhylomeDB" id="Q13887"/>
<dbReference type="TreeFam" id="TF350556"/>
<dbReference type="PathwayCommons" id="Q13887"/>
<dbReference type="Reactome" id="R-HSA-381340">
    <property type="pathway name" value="Transcriptional regulation of white adipocyte differentiation"/>
</dbReference>
<dbReference type="Reactome" id="R-HSA-9616222">
    <property type="pathway name" value="Transcriptional regulation of granulopoiesis"/>
</dbReference>
<dbReference type="SignaLink" id="Q13887"/>
<dbReference type="SIGNOR" id="Q13887"/>
<dbReference type="BioGRID-ORCS" id="688">
    <property type="hits" value="153 hits in 1191 CRISPR screens"/>
</dbReference>
<dbReference type="ChiTaRS" id="KLF5">
    <property type="organism name" value="human"/>
</dbReference>
<dbReference type="EvolutionaryTrace" id="Q13887"/>
<dbReference type="GeneWiki" id="KLF5"/>
<dbReference type="GenomeRNAi" id="688"/>
<dbReference type="Pharos" id="Q13887">
    <property type="development level" value="Tchem"/>
</dbReference>
<dbReference type="PRO" id="PR:Q13887"/>
<dbReference type="Proteomes" id="UP000005640">
    <property type="component" value="Chromosome 13"/>
</dbReference>
<dbReference type="RNAct" id="Q13887">
    <property type="molecule type" value="protein"/>
</dbReference>
<dbReference type="Bgee" id="ENSG00000102554">
    <property type="expression patterns" value="Expressed in lower esophagus mucosa and 174 other cell types or tissues"/>
</dbReference>
<dbReference type="ExpressionAtlas" id="Q13887">
    <property type="expression patterns" value="baseline and differential"/>
</dbReference>
<dbReference type="GO" id="GO:0000785">
    <property type="term" value="C:chromatin"/>
    <property type="evidence" value="ECO:0000247"/>
    <property type="project" value="NTNU_SB"/>
</dbReference>
<dbReference type="GO" id="GO:0005794">
    <property type="term" value="C:Golgi apparatus"/>
    <property type="evidence" value="ECO:0000314"/>
    <property type="project" value="HPA"/>
</dbReference>
<dbReference type="GO" id="GO:0043231">
    <property type="term" value="C:intracellular membrane-bounded organelle"/>
    <property type="evidence" value="ECO:0000314"/>
    <property type="project" value="HPA"/>
</dbReference>
<dbReference type="GO" id="GO:0005654">
    <property type="term" value="C:nucleoplasm"/>
    <property type="evidence" value="ECO:0000314"/>
    <property type="project" value="HPA"/>
</dbReference>
<dbReference type="GO" id="GO:0005667">
    <property type="term" value="C:transcription regulator complex"/>
    <property type="evidence" value="ECO:0007669"/>
    <property type="project" value="Ensembl"/>
</dbReference>
<dbReference type="GO" id="GO:0001228">
    <property type="term" value="F:DNA-binding transcription activator activity, RNA polymerase II-specific"/>
    <property type="evidence" value="ECO:0000314"/>
    <property type="project" value="NTNU_SB"/>
</dbReference>
<dbReference type="GO" id="GO:0000981">
    <property type="term" value="F:DNA-binding transcription factor activity, RNA polymerase II-specific"/>
    <property type="evidence" value="ECO:0000247"/>
    <property type="project" value="NTNU_SB"/>
</dbReference>
<dbReference type="GO" id="GO:0043426">
    <property type="term" value="F:MRF binding"/>
    <property type="evidence" value="ECO:0007669"/>
    <property type="project" value="Ensembl"/>
</dbReference>
<dbReference type="GO" id="GO:0000978">
    <property type="term" value="F:RNA polymerase II cis-regulatory region sequence-specific DNA binding"/>
    <property type="evidence" value="ECO:0000314"/>
    <property type="project" value="NTNU_SB"/>
</dbReference>
<dbReference type="GO" id="GO:1990837">
    <property type="term" value="F:sequence-specific double-stranded DNA binding"/>
    <property type="evidence" value="ECO:0000314"/>
    <property type="project" value="ARUK-UCL"/>
</dbReference>
<dbReference type="GO" id="GO:0008270">
    <property type="term" value="F:zinc ion binding"/>
    <property type="evidence" value="ECO:0007669"/>
    <property type="project" value="UniProtKB-KW"/>
</dbReference>
<dbReference type="GO" id="GO:0001525">
    <property type="term" value="P:angiogenesis"/>
    <property type="evidence" value="ECO:0007669"/>
    <property type="project" value="Ensembl"/>
</dbReference>
<dbReference type="GO" id="GO:1990830">
    <property type="term" value="P:cellular response to leukemia inhibitory factor"/>
    <property type="evidence" value="ECO:0007669"/>
    <property type="project" value="Ensembl"/>
</dbReference>
<dbReference type="GO" id="GO:1901653">
    <property type="term" value="P:cellular response to peptide"/>
    <property type="evidence" value="ECO:0007669"/>
    <property type="project" value="Ensembl"/>
</dbReference>
<dbReference type="GO" id="GO:0060576">
    <property type="term" value="P:intestinal epithelial cell development"/>
    <property type="evidence" value="ECO:0007669"/>
    <property type="project" value="Ensembl"/>
</dbReference>
<dbReference type="GO" id="GO:0030033">
    <property type="term" value="P:microvillus assembly"/>
    <property type="evidence" value="ECO:0007669"/>
    <property type="project" value="Ensembl"/>
</dbReference>
<dbReference type="GO" id="GO:0014908">
    <property type="term" value="P:myotube differentiation involved in skeletal muscle regeneration"/>
    <property type="evidence" value="ECO:0007669"/>
    <property type="project" value="Ensembl"/>
</dbReference>
<dbReference type="GO" id="GO:0000122">
    <property type="term" value="P:negative regulation of transcription by RNA polymerase II"/>
    <property type="evidence" value="ECO:0007669"/>
    <property type="project" value="Ensembl"/>
</dbReference>
<dbReference type="GO" id="GO:0008284">
    <property type="term" value="P:positive regulation of cell population proliferation"/>
    <property type="evidence" value="ECO:0007669"/>
    <property type="project" value="Ensembl"/>
</dbReference>
<dbReference type="GO" id="GO:0045600">
    <property type="term" value="P:positive regulation of fat cell differentiation"/>
    <property type="evidence" value="ECO:0007669"/>
    <property type="project" value="Ensembl"/>
</dbReference>
<dbReference type="GO" id="GO:0045944">
    <property type="term" value="P:positive regulation of transcription by RNA polymerase II"/>
    <property type="evidence" value="ECO:0000314"/>
    <property type="project" value="NTNU_SB"/>
</dbReference>
<dbReference type="GO" id="GO:0061586">
    <property type="term" value="P:positive regulation of transcription by transcription factor localization"/>
    <property type="evidence" value="ECO:0007669"/>
    <property type="project" value="Ensembl"/>
</dbReference>
<dbReference type="GO" id="GO:0032534">
    <property type="term" value="P:regulation of microvillus assembly"/>
    <property type="evidence" value="ECO:0007669"/>
    <property type="project" value="Ensembl"/>
</dbReference>
<dbReference type="GO" id="GO:0006357">
    <property type="term" value="P:regulation of transcription by RNA polymerase II"/>
    <property type="evidence" value="ECO:0000318"/>
    <property type="project" value="GO_Central"/>
</dbReference>
<dbReference type="GO" id="GO:0014901">
    <property type="term" value="P:satellite cell activation involved in skeletal muscle regeneration"/>
    <property type="evidence" value="ECO:0007669"/>
    <property type="project" value="Ensembl"/>
</dbReference>
<dbReference type="GO" id="GO:0014816">
    <property type="term" value="P:skeletal muscle satellite cell differentiation"/>
    <property type="evidence" value="ECO:0007669"/>
    <property type="project" value="Ensembl"/>
</dbReference>
<dbReference type="CDD" id="cd21579">
    <property type="entry name" value="KLF5_N"/>
    <property type="match status" value="1"/>
</dbReference>
<dbReference type="FunFam" id="3.30.160.60:FF:000021">
    <property type="entry name" value="Basic krueppel-like factor 3"/>
    <property type="match status" value="1"/>
</dbReference>
<dbReference type="FunFam" id="3.30.160.60:FF:000018">
    <property type="entry name" value="Krueppel-like factor 15"/>
    <property type="match status" value="1"/>
</dbReference>
<dbReference type="FunFam" id="3.30.160.60:FF:000463">
    <property type="entry name" value="Krueppel-like factor 5"/>
    <property type="match status" value="1"/>
</dbReference>
<dbReference type="Gene3D" id="3.30.160.60">
    <property type="entry name" value="Classic Zinc Finger"/>
    <property type="match status" value="3"/>
</dbReference>
<dbReference type="InterPro" id="IPR036236">
    <property type="entry name" value="Znf_C2H2_sf"/>
</dbReference>
<dbReference type="InterPro" id="IPR013087">
    <property type="entry name" value="Znf_C2H2_type"/>
</dbReference>
<dbReference type="PANTHER" id="PTHR23235:SF82">
    <property type="entry name" value="KRUEPPEL-LIKE FACTOR 5"/>
    <property type="match status" value="1"/>
</dbReference>
<dbReference type="PANTHER" id="PTHR23235">
    <property type="entry name" value="KRUEPPEL-LIKE TRANSCRIPTION FACTOR"/>
    <property type="match status" value="1"/>
</dbReference>
<dbReference type="Pfam" id="PF00096">
    <property type="entry name" value="zf-C2H2"/>
    <property type="match status" value="3"/>
</dbReference>
<dbReference type="SMART" id="SM00355">
    <property type="entry name" value="ZnF_C2H2"/>
    <property type="match status" value="3"/>
</dbReference>
<dbReference type="SUPFAM" id="SSF57667">
    <property type="entry name" value="beta-beta-alpha zinc fingers"/>
    <property type="match status" value="2"/>
</dbReference>
<dbReference type="PROSITE" id="PS00028">
    <property type="entry name" value="ZINC_FINGER_C2H2_1"/>
    <property type="match status" value="3"/>
</dbReference>
<dbReference type="PROSITE" id="PS50157">
    <property type="entry name" value="ZINC_FINGER_C2H2_2"/>
    <property type="match status" value="3"/>
</dbReference>
<accession>Q13887</accession>
<accession>A2TJX0</accession>
<accession>L0R3U5</accession>
<accession>L0R4T9</accession>
<accession>Q9UHP8</accession>
<gene>
    <name type="primary">KLF5</name>
    <name type="synonym">BTEB2</name>
    <name type="synonym">CKLF</name>
    <name type="synonym">IKLF</name>
</gene>